<accession>Q7WD18</accession>
<organism>
    <name type="scientific">Bordetella bronchiseptica (strain ATCC BAA-588 / NCTC 13252 / RB50)</name>
    <name type="common">Alcaligenes bronchisepticus</name>
    <dbReference type="NCBI Taxonomy" id="257310"/>
    <lineage>
        <taxon>Bacteria</taxon>
        <taxon>Pseudomonadati</taxon>
        <taxon>Pseudomonadota</taxon>
        <taxon>Betaproteobacteria</taxon>
        <taxon>Burkholderiales</taxon>
        <taxon>Alcaligenaceae</taxon>
        <taxon>Bordetella</taxon>
    </lineage>
</organism>
<evidence type="ECO:0000255" key="1">
    <source>
        <dbReference type="HAMAP-Rule" id="MF_00340"/>
    </source>
</evidence>
<evidence type="ECO:0000256" key="2">
    <source>
        <dbReference type="SAM" id="MobiDB-lite"/>
    </source>
</evidence>
<evidence type="ECO:0000305" key="3"/>
<proteinExistence type="inferred from homology"/>
<reference key="1">
    <citation type="journal article" date="2003" name="Nat. Genet.">
        <title>Comparative analysis of the genome sequences of Bordetella pertussis, Bordetella parapertussis and Bordetella bronchiseptica.</title>
        <authorList>
            <person name="Parkhill J."/>
            <person name="Sebaihia M."/>
            <person name="Preston A."/>
            <person name="Murphy L.D."/>
            <person name="Thomson N.R."/>
            <person name="Harris D.E."/>
            <person name="Holden M.T.G."/>
            <person name="Churcher C.M."/>
            <person name="Bentley S.D."/>
            <person name="Mungall K.L."/>
            <person name="Cerdeno-Tarraga A.-M."/>
            <person name="Temple L."/>
            <person name="James K.D."/>
            <person name="Harris B."/>
            <person name="Quail M.A."/>
            <person name="Achtman M."/>
            <person name="Atkin R."/>
            <person name="Baker S."/>
            <person name="Basham D."/>
            <person name="Bason N."/>
            <person name="Cherevach I."/>
            <person name="Chillingworth T."/>
            <person name="Collins M."/>
            <person name="Cronin A."/>
            <person name="Davis P."/>
            <person name="Doggett J."/>
            <person name="Feltwell T."/>
            <person name="Goble A."/>
            <person name="Hamlin N."/>
            <person name="Hauser H."/>
            <person name="Holroyd S."/>
            <person name="Jagels K."/>
            <person name="Leather S."/>
            <person name="Moule S."/>
            <person name="Norberczak H."/>
            <person name="O'Neil S."/>
            <person name="Ormond D."/>
            <person name="Price C."/>
            <person name="Rabbinowitsch E."/>
            <person name="Rutter S."/>
            <person name="Sanders M."/>
            <person name="Saunders D."/>
            <person name="Seeger K."/>
            <person name="Sharp S."/>
            <person name="Simmonds M."/>
            <person name="Skelton J."/>
            <person name="Squares R."/>
            <person name="Squares S."/>
            <person name="Stevens K."/>
            <person name="Unwin L."/>
            <person name="Whitehead S."/>
            <person name="Barrell B.G."/>
            <person name="Maskell D.J."/>
        </authorList>
    </citation>
    <scope>NUCLEOTIDE SEQUENCE [LARGE SCALE GENOMIC DNA]</scope>
    <source>
        <strain>ATCC BAA-588 / NCTC 13252 / RB50</strain>
    </source>
</reference>
<name>RL32_BORBR</name>
<comment type="similarity">
    <text evidence="1">Belongs to the bacterial ribosomal protein bL32 family.</text>
</comment>
<dbReference type="EMBL" id="BX640448">
    <property type="protein sequence ID" value="CAE35734.1"/>
    <property type="molecule type" value="Genomic_DNA"/>
</dbReference>
<dbReference type="RefSeq" id="WP_003813827.1">
    <property type="nucleotide sequence ID" value="NC_002927.3"/>
</dbReference>
<dbReference type="SMR" id="Q7WD18"/>
<dbReference type="GeneID" id="93205091"/>
<dbReference type="KEGG" id="bbr:BB3760"/>
<dbReference type="eggNOG" id="COG0333">
    <property type="taxonomic scope" value="Bacteria"/>
</dbReference>
<dbReference type="HOGENOM" id="CLU_129084_2_1_4"/>
<dbReference type="Proteomes" id="UP000001027">
    <property type="component" value="Chromosome"/>
</dbReference>
<dbReference type="GO" id="GO:0015934">
    <property type="term" value="C:large ribosomal subunit"/>
    <property type="evidence" value="ECO:0007669"/>
    <property type="project" value="InterPro"/>
</dbReference>
<dbReference type="GO" id="GO:0003735">
    <property type="term" value="F:structural constituent of ribosome"/>
    <property type="evidence" value="ECO:0007669"/>
    <property type="project" value="InterPro"/>
</dbReference>
<dbReference type="GO" id="GO:0006412">
    <property type="term" value="P:translation"/>
    <property type="evidence" value="ECO:0007669"/>
    <property type="project" value="UniProtKB-UniRule"/>
</dbReference>
<dbReference type="HAMAP" id="MF_00340">
    <property type="entry name" value="Ribosomal_bL32"/>
    <property type="match status" value="1"/>
</dbReference>
<dbReference type="InterPro" id="IPR002677">
    <property type="entry name" value="Ribosomal_bL32"/>
</dbReference>
<dbReference type="InterPro" id="IPR044957">
    <property type="entry name" value="Ribosomal_bL32_bact"/>
</dbReference>
<dbReference type="InterPro" id="IPR011332">
    <property type="entry name" value="Ribosomal_zn-bd"/>
</dbReference>
<dbReference type="NCBIfam" id="TIGR01031">
    <property type="entry name" value="rpmF_bact"/>
    <property type="match status" value="1"/>
</dbReference>
<dbReference type="PANTHER" id="PTHR35534">
    <property type="entry name" value="50S RIBOSOMAL PROTEIN L32"/>
    <property type="match status" value="1"/>
</dbReference>
<dbReference type="PANTHER" id="PTHR35534:SF1">
    <property type="entry name" value="LARGE RIBOSOMAL SUBUNIT PROTEIN BL32"/>
    <property type="match status" value="1"/>
</dbReference>
<dbReference type="Pfam" id="PF01783">
    <property type="entry name" value="Ribosomal_L32p"/>
    <property type="match status" value="1"/>
</dbReference>
<dbReference type="SUPFAM" id="SSF57829">
    <property type="entry name" value="Zn-binding ribosomal proteins"/>
    <property type="match status" value="1"/>
</dbReference>
<feature type="chain" id="PRO_0000172312" description="Large ribosomal subunit protein bL32">
    <location>
        <begin position="1"/>
        <end position="60"/>
    </location>
</feature>
<feature type="region of interest" description="Disordered" evidence="2">
    <location>
        <begin position="1"/>
        <end position="60"/>
    </location>
</feature>
<feature type="compositionally biased region" description="Basic residues" evidence="2">
    <location>
        <begin position="49"/>
        <end position="60"/>
    </location>
</feature>
<protein>
    <recommendedName>
        <fullName evidence="1">Large ribosomal subunit protein bL32</fullName>
    </recommendedName>
    <alternativeName>
        <fullName evidence="3">50S ribosomal protein L32</fullName>
    </alternativeName>
</protein>
<keyword id="KW-0687">Ribonucleoprotein</keyword>
<keyword id="KW-0689">Ribosomal protein</keyword>
<gene>
    <name evidence="1" type="primary">rpmF</name>
    <name type="ordered locus">BB3760</name>
</gene>
<sequence length="60" mass="6821">MAVQQNKKSPSKRGMHRSHDFLVNPATAIEPNTGETHLRHHISPNGFYRGRKVLKTKADE</sequence>